<accession>A4GG96</accession>
<organism>
    <name type="scientific">Phaseolus vulgaris</name>
    <name type="common">Kidney bean</name>
    <name type="synonym">French bean</name>
    <dbReference type="NCBI Taxonomy" id="3885"/>
    <lineage>
        <taxon>Eukaryota</taxon>
        <taxon>Viridiplantae</taxon>
        <taxon>Streptophyta</taxon>
        <taxon>Embryophyta</taxon>
        <taxon>Tracheophyta</taxon>
        <taxon>Spermatophyta</taxon>
        <taxon>Magnoliopsida</taxon>
        <taxon>eudicotyledons</taxon>
        <taxon>Gunneridae</taxon>
        <taxon>Pentapetalae</taxon>
        <taxon>rosids</taxon>
        <taxon>fabids</taxon>
        <taxon>Fabales</taxon>
        <taxon>Fabaceae</taxon>
        <taxon>Papilionoideae</taxon>
        <taxon>50 kb inversion clade</taxon>
        <taxon>NPAAA clade</taxon>
        <taxon>indigoferoid/millettioid clade</taxon>
        <taxon>Phaseoleae</taxon>
        <taxon>Phaseolus</taxon>
    </lineage>
</organism>
<feature type="chain" id="PRO_0000325071" description="Photosystem I assembly protein Ycf3">
    <location>
        <begin position="1"/>
        <end position="168"/>
    </location>
</feature>
<feature type="repeat" description="TPR 1">
    <location>
        <begin position="35"/>
        <end position="68"/>
    </location>
</feature>
<feature type="repeat" description="TPR 2">
    <location>
        <begin position="72"/>
        <end position="105"/>
    </location>
</feature>
<feature type="repeat" description="TPR 3">
    <location>
        <begin position="120"/>
        <end position="153"/>
    </location>
</feature>
<proteinExistence type="inferred from homology"/>
<protein>
    <recommendedName>
        <fullName evidence="1">Photosystem I assembly protein Ycf3</fullName>
    </recommendedName>
</protein>
<sequence length="168" mass="19529">MPRSRINENFIDKTFSIVANILLRIIPTTSGEKRAFTYYRDGMSAQSEGNYAEALQNYYEAMRLEIDPYDRSYILYNIGLIHTSNGEHTKALEYYFRALERNPFLPQAFNNMAVICHYRGEQAIRQGDSEVAESWFNQAAEYWKQAIALTPGNYIAAQNWLKITGRFE</sequence>
<dbReference type="EMBL" id="DQ886273">
    <property type="protein sequence ID" value="ABH88077.1"/>
    <property type="molecule type" value="Genomic_DNA"/>
</dbReference>
<dbReference type="EMBL" id="EU196765">
    <property type="protein sequence ID" value="ABW22791.1"/>
    <property type="molecule type" value="Genomic_DNA"/>
</dbReference>
<dbReference type="RefSeq" id="YP_001122797.1">
    <property type="nucleotide sequence ID" value="NC_009259.1"/>
</dbReference>
<dbReference type="SMR" id="A4GG96"/>
<dbReference type="GeneID" id="4961740"/>
<dbReference type="KEGG" id="pvu:4961740"/>
<dbReference type="GO" id="GO:0009535">
    <property type="term" value="C:chloroplast thylakoid membrane"/>
    <property type="evidence" value="ECO:0007669"/>
    <property type="project" value="UniProtKB-SubCell"/>
</dbReference>
<dbReference type="GO" id="GO:0015979">
    <property type="term" value="P:photosynthesis"/>
    <property type="evidence" value="ECO:0007669"/>
    <property type="project" value="UniProtKB-UniRule"/>
</dbReference>
<dbReference type="FunFam" id="1.25.40.10:FF:000004">
    <property type="entry name" value="Photosystem I assembly protein Ycf3"/>
    <property type="match status" value="1"/>
</dbReference>
<dbReference type="Gene3D" id="1.25.40.10">
    <property type="entry name" value="Tetratricopeptide repeat domain"/>
    <property type="match status" value="1"/>
</dbReference>
<dbReference type="HAMAP" id="MF_00439">
    <property type="entry name" value="Ycf3"/>
    <property type="match status" value="1"/>
</dbReference>
<dbReference type="InterPro" id="IPR022818">
    <property type="entry name" value="PSI_Ycf3_assembly"/>
</dbReference>
<dbReference type="InterPro" id="IPR011990">
    <property type="entry name" value="TPR-like_helical_dom_sf"/>
</dbReference>
<dbReference type="InterPro" id="IPR019734">
    <property type="entry name" value="TPR_rpt"/>
</dbReference>
<dbReference type="InterPro" id="IPR051685">
    <property type="entry name" value="Ycf3/AcsC/BcsC/TPR_MFPF"/>
</dbReference>
<dbReference type="NCBIfam" id="NF002725">
    <property type="entry name" value="PRK02603.1"/>
    <property type="match status" value="1"/>
</dbReference>
<dbReference type="PANTHER" id="PTHR44943">
    <property type="entry name" value="CELLULOSE SYNTHASE OPERON PROTEIN C"/>
    <property type="match status" value="1"/>
</dbReference>
<dbReference type="PANTHER" id="PTHR44943:SF8">
    <property type="entry name" value="TPR REPEAT-CONTAINING PROTEIN MJ0263"/>
    <property type="match status" value="1"/>
</dbReference>
<dbReference type="Pfam" id="PF00515">
    <property type="entry name" value="TPR_1"/>
    <property type="match status" value="1"/>
</dbReference>
<dbReference type="SMART" id="SM00028">
    <property type="entry name" value="TPR"/>
    <property type="match status" value="3"/>
</dbReference>
<dbReference type="SUPFAM" id="SSF48452">
    <property type="entry name" value="TPR-like"/>
    <property type="match status" value="1"/>
</dbReference>
<dbReference type="PROSITE" id="PS50005">
    <property type="entry name" value="TPR"/>
    <property type="match status" value="3"/>
</dbReference>
<dbReference type="PROSITE" id="PS50293">
    <property type="entry name" value="TPR_REGION"/>
    <property type="match status" value="1"/>
</dbReference>
<comment type="function">
    <text evidence="1">Essential for the assembly of the photosystem I (PSI) complex. May act as a chaperone-like factor to guide the assembly of the PSI subunits.</text>
</comment>
<comment type="subcellular location">
    <subcellularLocation>
        <location evidence="1">Plastid</location>
        <location evidence="1">Chloroplast thylakoid membrane</location>
        <topology evidence="1">Peripheral membrane protein</topology>
    </subcellularLocation>
</comment>
<comment type="similarity">
    <text evidence="1">Belongs to the Ycf3 family.</text>
</comment>
<evidence type="ECO:0000255" key="1">
    <source>
        <dbReference type="HAMAP-Rule" id="MF_00439"/>
    </source>
</evidence>
<name>YCF3_PHAVU</name>
<gene>
    <name evidence="1" type="primary">ycf3</name>
</gene>
<geneLocation type="chloroplast"/>
<keyword id="KW-0150">Chloroplast</keyword>
<keyword id="KW-0472">Membrane</keyword>
<keyword id="KW-0602">Photosynthesis</keyword>
<keyword id="KW-0934">Plastid</keyword>
<keyword id="KW-0677">Repeat</keyword>
<keyword id="KW-0793">Thylakoid</keyword>
<keyword id="KW-0802">TPR repeat</keyword>
<reference key="1">
    <citation type="journal article" date="2007" name="BMC Genomics">
        <title>Rapid evolutionary change of common bean (Phaseolus vulgaris L) plastome, and the genomic diversification of legume chloroplasts.</title>
        <authorList>
            <person name="Guo X."/>
            <person name="Castillo-Ramirez S."/>
            <person name="Gonzalez V."/>
            <person name="Bustos P."/>
            <person name="Fernandez-Vazquez J.L."/>
            <person name="Santamaria R.I."/>
            <person name="Arellano J."/>
            <person name="Cevallos M.A."/>
            <person name="Davila G."/>
        </authorList>
    </citation>
    <scope>NUCLEOTIDE SEQUENCE [LARGE SCALE GENOMIC DNA]</scope>
    <source>
        <strain>cv. Negro Jamapa</strain>
    </source>
</reference>
<reference key="2">
    <citation type="submission" date="2007-10" db="EMBL/GenBank/DDBJ databases">
        <title>Complete nucleotide sequence of the plastid genome of the common bean, Phaseolus vulgaris.</title>
        <authorList>
            <person name="Moore M.J."/>
            <person name="Triplett E.W."/>
            <person name="Broughton W.J."/>
            <person name="Soltis P.S."/>
            <person name="Soltis D.E."/>
        </authorList>
    </citation>
    <scope>NUCLEOTIDE SEQUENCE [LARGE SCALE GENOMIC DNA]</scope>
</reference>